<name>SYI_ACIAD</name>
<protein>
    <recommendedName>
        <fullName evidence="1">Isoleucine--tRNA ligase</fullName>
        <ecNumber evidence="1">6.1.1.5</ecNumber>
    </recommendedName>
    <alternativeName>
        <fullName evidence="1">Isoleucyl-tRNA synthetase</fullName>
        <shortName evidence="1">IleRS</shortName>
    </alternativeName>
</protein>
<comment type="function">
    <text evidence="1">Catalyzes the attachment of isoleucine to tRNA(Ile). As IleRS can inadvertently accommodate and process structurally similar amino acids such as valine, to avoid such errors it has two additional distinct tRNA(Ile)-dependent editing activities. One activity is designated as 'pretransfer' editing and involves the hydrolysis of activated Val-AMP. The other activity is designated 'posttransfer' editing and involves deacylation of mischarged Val-tRNA(Ile).</text>
</comment>
<comment type="catalytic activity">
    <reaction evidence="1">
        <text>tRNA(Ile) + L-isoleucine + ATP = L-isoleucyl-tRNA(Ile) + AMP + diphosphate</text>
        <dbReference type="Rhea" id="RHEA:11060"/>
        <dbReference type="Rhea" id="RHEA-COMP:9666"/>
        <dbReference type="Rhea" id="RHEA-COMP:9695"/>
        <dbReference type="ChEBI" id="CHEBI:30616"/>
        <dbReference type="ChEBI" id="CHEBI:33019"/>
        <dbReference type="ChEBI" id="CHEBI:58045"/>
        <dbReference type="ChEBI" id="CHEBI:78442"/>
        <dbReference type="ChEBI" id="CHEBI:78528"/>
        <dbReference type="ChEBI" id="CHEBI:456215"/>
        <dbReference type="EC" id="6.1.1.5"/>
    </reaction>
</comment>
<comment type="cofactor">
    <cofactor evidence="1">
        <name>Zn(2+)</name>
        <dbReference type="ChEBI" id="CHEBI:29105"/>
    </cofactor>
    <text evidence="1">Binds 1 zinc ion per subunit.</text>
</comment>
<comment type="subunit">
    <text evidence="1">Monomer.</text>
</comment>
<comment type="subcellular location">
    <subcellularLocation>
        <location evidence="1">Cytoplasm</location>
    </subcellularLocation>
</comment>
<comment type="domain">
    <text evidence="1">IleRS has two distinct active sites: one for aminoacylation and one for editing. The misactivated valine is translocated from the active site to the editing site, which sterically excludes the correctly activated isoleucine. The single editing site contains two valyl binding pockets, one specific for each substrate (Val-AMP or Val-tRNA(Ile)).</text>
</comment>
<comment type="similarity">
    <text evidence="1">Belongs to the class-I aminoacyl-tRNA synthetase family. IleS type 1 subfamily.</text>
</comment>
<gene>
    <name evidence="1" type="primary">ileS</name>
    <name type="ordered locus">ACIAD0022</name>
</gene>
<accession>Q6FG02</accession>
<dbReference type="EC" id="6.1.1.5" evidence="1"/>
<dbReference type="EMBL" id="CR543861">
    <property type="protein sequence ID" value="CAG67005.1"/>
    <property type="molecule type" value="Genomic_DNA"/>
</dbReference>
<dbReference type="RefSeq" id="WP_004930969.1">
    <property type="nucleotide sequence ID" value="NC_005966.1"/>
</dbReference>
<dbReference type="SMR" id="Q6FG02"/>
<dbReference type="STRING" id="202950.GCA_001485005_01770"/>
<dbReference type="GeneID" id="45232556"/>
<dbReference type="KEGG" id="aci:ACIAD0022"/>
<dbReference type="eggNOG" id="COG0060">
    <property type="taxonomic scope" value="Bacteria"/>
</dbReference>
<dbReference type="HOGENOM" id="CLU_001493_7_0_6"/>
<dbReference type="OrthoDB" id="9810365at2"/>
<dbReference type="BioCyc" id="ASP62977:ACIAD_RS00120-MONOMER"/>
<dbReference type="Proteomes" id="UP000000430">
    <property type="component" value="Chromosome"/>
</dbReference>
<dbReference type="GO" id="GO:0005829">
    <property type="term" value="C:cytosol"/>
    <property type="evidence" value="ECO:0007669"/>
    <property type="project" value="TreeGrafter"/>
</dbReference>
<dbReference type="GO" id="GO:0002161">
    <property type="term" value="F:aminoacyl-tRNA deacylase activity"/>
    <property type="evidence" value="ECO:0007669"/>
    <property type="project" value="InterPro"/>
</dbReference>
<dbReference type="GO" id="GO:0005524">
    <property type="term" value="F:ATP binding"/>
    <property type="evidence" value="ECO:0007669"/>
    <property type="project" value="UniProtKB-UniRule"/>
</dbReference>
<dbReference type="GO" id="GO:0004822">
    <property type="term" value="F:isoleucine-tRNA ligase activity"/>
    <property type="evidence" value="ECO:0007669"/>
    <property type="project" value="UniProtKB-UniRule"/>
</dbReference>
<dbReference type="GO" id="GO:0000049">
    <property type="term" value="F:tRNA binding"/>
    <property type="evidence" value="ECO:0007669"/>
    <property type="project" value="InterPro"/>
</dbReference>
<dbReference type="GO" id="GO:0008270">
    <property type="term" value="F:zinc ion binding"/>
    <property type="evidence" value="ECO:0007669"/>
    <property type="project" value="UniProtKB-UniRule"/>
</dbReference>
<dbReference type="GO" id="GO:0006428">
    <property type="term" value="P:isoleucyl-tRNA aminoacylation"/>
    <property type="evidence" value="ECO:0007669"/>
    <property type="project" value="UniProtKB-UniRule"/>
</dbReference>
<dbReference type="CDD" id="cd07960">
    <property type="entry name" value="Anticodon_Ia_Ile_BEm"/>
    <property type="match status" value="1"/>
</dbReference>
<dbReference type="FunFam" id="1.10.730.20:FF:000001">
    <property type="entry name" value="Isoleucine--tRNA ligase"/>
    <property type="match status" value="1"/>
</dbReference>
<dbReference type="FunFam" id="3.40.50.620:FF:000042">
    <property type="entry name" value="Isoleucine--tRNA ligase"/>
    <property type="match status" value="1"/>
</dbReference>
<dbReference type="FunFam" id="3.40.50.620:FF:000048">
    <property type="entry name" value="Isoleucine--tRNA ligase"/>
    <property type="match status" value="1"/>
</dbReference>
<dbReference type="Gene3D" id="1.10.730.20">
    <property type="match status" value="1"/>
</dbReference>
<dbReference type="Gene3D" id="3.40.50.620">
    <property type="entry name" value="HUPs"/>
    <property type="match status" value="2"/>
</dbReference>
<dbReference type="Gene3D" id="1.10.10.830">
    <property type="entry name" value="Ile-tRNA synthetase CP2 domain-like"/>
    <property type="match status" value="1"/>
</dbReference>
<dbReference type="Gene3D" id="3.90.740.10">
    <property type="entry name" value="Valyl/Leucyl/Isoleucyl-tRNA synthetase, editing domain"/>
    <property type="match status" value="1"/>
</dbReference>
<dbReference type="HAMAP" id="MF_02002">
    <property type="entry name" value="Ile_tRNA_synth_type1"/>
    <property type="match status" value="1"/>
</dbReference>
<dbReference type="InterPro" id="IPR001412">
    <property type="entry name" value="aa-tRNA-synth_I_CS"/>
</dbReference>
<dbReference type="InterPro" id="IPR002300">
    <property type="entry name" value="aa-tRNA-synth_Ia"/>
</dbReference>
<dbReference type="InterPro" id="IPR033708">
    <property type="entry name" value="Anticodon_Ile_BEm"/>
</dbReference>
<dbReference type="InterPro" id="IPR002301">
    <property type="entry name" value="Ile-tRNA-ligase"/>
</dbReference>
<dbReference type="InterPro" id="IPR023585">
    <property type="entry name" value="Ile-tRNA-ligase_type1"/>
</dbReference>
<dbReference type="InterPro" id="IPR050081">
    <property type="entry name" value="Ile-tRNA_ligase"/>
</dbReference>
<dbReference type="InterPro" id="IPR013155">
    <property type="entry name" value="M/V/L/I-tRNA-synth_anticd-bd"/>
</dbReference>
<dbReference type="InterPro" id="IPR014729">
    <property type="entry name" value="Rossmann-like_a/b/a_fold"/>
</dbReference>
<dbReference type="InterPro" id="IPR009080">
    <property type="entry name" value="tRNAsynth_Ia_anticodon-bd"/>
</dbReference>
<dbReference type="InterPro" id="IPR009008">
    <property type="entry name" value="Val/Leu/Ile-tRNA-synth_edit"/>
</dbReference>
<dbReference type="InterPro" id="IPR010663">
    <property type="entry name" value="Znf_FPG/IleRS"/>
</dbReference>
<dbReference type="NCBIfam" id="TIGR00392">
    <property type="entry name" value="ileS"/>
    <property type="match status" value="1"/>
</dbReference>
<dbReference type="PANTHER" id="PTHR42765:SF1">
    <property type="entry name" value="ISOLEUCINE--TRNA LIGASE, MITOCHONDRIAL"/>
    <property type="match status" value="1"/>
</dbReference>
<dbReference type="PANTHER" id="PTHR42765">
    <property type="entry name" value="SOLEUCYL-TRNA SYNTHETASE"/>
    <property type="match status" value="1"/>
</dbReference>
<dbReference type="Pfam" id="PF08264">
    <property type="entry name" value="Anticodon_1"/>
    <property type="match status" value="1"/>
</dbReference>
<dbReference type="Pfam" id="PF00133">
    <property type="entry name" value="tRNA-synt_1"/>
    <property type="match status" value="1"/>
</dbReference>
<dbReference type="Pfam" id="PF06827">
    <property type="entry name" value="zf-FPG_IleRS"/>
    <property type="match status" value="1"/>
</dbReference>
<dbReference type="PRINTS" id="PR00984">
    <property type="entry name" value="TRNASYNTHILE"/>
</dbReference>
<dbReference type="SUPFAM" id="SSF47323">
    <property type="entry name" value="Anticodon-binding domain of a subclass of class I aminoacyl-tRNA synthetases"/>
    <property type="match status" value="1"/>
</dbReference>
<dbReference type="SUPFAM" id="SSF52374">
    <property type="entry name" value="Nucleotidylyl transferase"/>
    <property type="match status" value="1"/>
</dbReference>
<dbReference type="SUPFAM" id="SSF50677">
    <property type="entry name" value="ValRS/IleRS/LeuRS editing domain"/>
    <property type="match status" value="1"/>
</dbReference>
<dbReference type="PROSITE" id="PS00178">
    <property type="entry name" value="AA_TRNA_LIGASE_I"/>
    <property type="match status" value="1"/>
</dbReference>
<feature type="chain" id="PRO_0000098338" description="Isoleucine--tRNA ligase">
    <location>
        <begin position="1"/>
        <end position="945"/>
    </location>
</feature>
<feature type="short sequence motif" description="'HIGH' region">
    <location>
        <begin position="67"/>
        <end position="77"/>
    </location>
</feature>
<feature type="short sequence motif" description="'KMSKS' region">
    <location>
        <begin position="614"/>
        <end position="618"/>
    </location>
</feature>
<feature type="binding site" evidence="1">
    <location>
        <position position="573"/>
    </location>
    <ligand>
        <name>L-isoleucyl-5'-AMP</name>
        <dbReference type="ChEBI" id="CHEBI:178002"/>
    </ligand>
</feature>
<feature type="binding site" evidence="1">
    <location>
        <position position="617"/>
    </location>
    <ligand>
        <name>ATP</name>
        <dbReference type="ChEBI" id="CHEBI:30616"/>
    </ligand>
</feature>
<feature type="binding site" evidence="1">
    <location>
        <position position="908"/>
    </location>
    <ligand>
        <name>Zn(2+)</name>
        <dbReference type="ChEBI" id="CHEBI:29105"/>
    </ligand>
</feature>
<feature type="binding site" evidence="1">
    <location>
        <position position="911"/>
    </location>
    <ligand>
        <name>Zn(2+)</name>
        <dbReference type="ChEBI" id="CHEBI:29105"/>
    </ligand>
</feature>
<feature type="binding site" evidence="1">
    <location>
        <position position="928"/>
    </location>
    <ligand>
        <name>Zn(2+)</name>
        <dbReference type="ChEBI" id="CHEBI:29105"/>
    </ligand>
</feature>
<feature type="binding site" evidence="1">
    <location>
        <position position="931"/>
    </location>
    <ligand>
        <name>Zn(2+)</name>
        <dbReference type="ChEBI" id="CHEBI:29105"/>
    </ligand>
</feature>
<organism>
    <name type="scientific">Acinetobacter baylyi (strain ATCC 33305 / BD413 / ADP1)</name>
    <dbReference type="NCBI Taxonomy" id="62977"/>
    <lineage>
        <taxon>Bacteria</taxon>
        <taxon>Pseudomonadati</taxon>
        <taxon>Pseudomonadota</taxon>
        <taxon>Gammaproteobacteria</taxon>
        <taxon>Moraxellales</taxon>
        <taxon>Moraxellaceae</taxon>
        <taxon>Acinetobacter</taxon>
    </lineage>
</organism>
<keyword id="KW-0030">Aminoacyl-tRNA synthetase</keyword>
<keyword id="KW-0067">ATP-binding</keyword>
<keyword id="KW-0963">Cytoplasm</keyword>
<keyword id="KW-0436">Ligase</keyword>
<keyword id="KW-0479">Metal-binding</keyword>
<keyword id="KW-0547">Nucleotide-binding</keyword>
<keyword id="KW-0648">Protein biosynthesis</keyword>
<keyword id="KW-0862">Zinc</keyword>
<reference key="1">
    <citation type="journal article" date="2004" name="Nucleic Acids Res.">
        <title>Unique features revealed by the genome sequence of Acinetobacter sp. ADP1, a versatile and naturally transformation competent bacterium.</title>
        <authorList>
            <person name="Barbe V."/>
            <person name="Vallenet D."/>
            <person name="Fonknechten N."/>
            <person name="Kreimeyer A."/>
            <person name="Oztas S."/>
            <person name="Labarre L."/>
            <person name="Cruveiller S."/>
            <person name="Robert C."/>
            <person name="Duprat S."/>
            <person name="Wincker P."/>
            <person name="Ornston L.N."/>
            <person name="Weissenbach J."/>
            <person name="Marliere P."/>
            <person name="Cohen G.N."/>
            <person name="Medigue C."/>
        </authorList>
    </citation>
    <scope>NUCLEOTIDE SEQUENCE [LARGE SCALE GENOMIC DNA]</scope>
    <source>
        <strain>ATCC 33305 / BD413 / ADP1</strain>
    </source>
</reference>
<evidence type="ECO:0000255" key="1">
    <source>
        <dbReference type="HAMAP-Rule" id="MF_02002"/>
    </source>
</evidence>
<sequence length="945" mass="106145">MSDKQTPENAVDYKATLNLPGTEFAMKANLAVREVKWLEEWYADNIYQKIRASRIGKKKYVLHDGPPYANGQIHLGHAVNKVLKDIIVKSRVMDGFDAPYVPGWDCHGLPIELKVEEKVGKVGVKVDASTFRKACREYALSQVDLQRKDFIRMGVFGDWQDPYLTMNFKQEADIVRSLGEIQKAGHIEPGLKPVNWCIDCGSALAEAEVEYEDKKSDAIDVGFGVVDLNDLSARLNVEVQDPTDIVIWTTTPWTLPANQAVALHAEIDYQLVQVQSDRGTQNFILAKDLVESAIARYKLENPVVLADFKGAVLELLQLQHPLLADRQVPVILGEHVIATSGTGAVHTAPGHGTDDYKVGLIYNLKVDNPVGGNGVYLPTAPIFSGEHIYKANPQIIEALGATGRLWAHQPIVHSYPHCWRHKTPIIFRATPQWFISMDAKGLRECALNAIENDISFVPDWGKNRIESMIEGRPDWCISRQRTWGVPIPFFVHKDTNELHPRTPELIEEVAQLIEHEGIDAWFNREAKDFIGADAEHYNAVRDTLDVWFDSGTTHYAVLRQREELTDPADLYLEGSDQHRGWFQSSLLTSIAINERAPYKGLLTHGFVVDEKGRKMSKSLGNIITPQDIIKDMGADGLRFWIASSDYRYEMTAGKEIFSRASDGYRRIRNTLRFLLANLNGFTPSTDALPVDQLIALDQYILQRAAEVQKTVQQAYEDMNFHIVCSALTNFCINDLGGFYLDIIKDRQYTTKADSAARHSAQTALYHLVQAFVRWMSPILSFTAQEAWPLIPEQTEQYVFTTEWYDIPVASTANLISEADWQTLISVKSAVNKQIEAARNAKLVGSNLSAKVEIWAKDELQSVLNQLGDELRFVLITSQVNVYPYAEQGESTEMDGLRVQISAAEGEKCVRCWHVLPDVNTHADHPGLCGRCIINVTGSGEVRKYA</sequence>
<proteinExistence type="inferred from homology"/>